<name>IDI2_CHLL3</name>
<evidence type="ECO:0000255" key="1">
    <source>
        <dbReference type="HAMAP-Rule" id="MF_00354"/>
    </source>
</evidence>
<keyword id="KW-0963">Cytoplasm</keyword>
<keyword id="KW-0285">Flavoprotein</keyword>
<keyword id="KW-0288">FMN</keyword>
<keyword id="KW-0413">Isomerase</keyword>
<keyword id="KW-0414">Isoprene biosynthesis</keyword>
<keyword id="KW-0460">Magnesium</keyword>
<keyword id="KW-0479">Metal-binding</keyword>
<keyword id="KW-0521">NADP</keyword>
<keyword id="KW-1185">Reference proteome</keyword>
<protein>
    <recommendedName>
        <fullName evidence="1">Isopentenyl-diphosphate delta-isomerase</fullName>
        <shortName evidence="1">IPP isomerase</shortName>
        <ecNumber evidence="1">5.3.3.2</ecNumber>
    </recommendedName>
    <alternativeName>
        <fullName evidence="1">Isopentenyl diphosphate:dimethylallyl diphosphate isomerase</fullName>
    </alternativeName>
    <alternativeName>
        <fullName evidence="1">Isopentenyl pyrophosphate isomerase</fullName>
    </alternativeName>
    <alternativeName>
        <fullName evidence="1">Type 2 isopentenyl diphosphate isomerase</fullName>
        <shortName evidence="1">IDI-2</shortName>
    </alternativeName>
</protein>
<dbReference type="EC" id="5.3.3.2" evidence="1"/>
<dbReference type="EMBL" id="CP000096">
    <property type="protein sequence ID" value="ABB24618.1"/>
    <property type="molecule type" value="Genomic_DNA"/>
</dbReference>
<dbReference type="RefSeq" id="WP_011358490.1">
    <property type="nucleotide sequence ID" value="NC_007512.1"/>
</dbReference>
<dbReference type="SMR" id="Q3B213"/>
<dbReference type="STRING" id="319225.Plut_1764"/>
<dbReference type="KEGG" id="plt:Plut_1764"/>
<dbReference type="eggNOG" id="COG1304">
    <property type="taxonomic scope" value="Bacteria"/>
</dbReference>
<dbReference type="HOGENOM" id="CLU_065515_1_0_10"/>
<dbReference type="OrthoDB" id="9795032at2"/>
<dbReference type="Proteomes" id="UP000002709">
    <property type="component" value="Chromosome"/>
</dbReference>
<dbReference type="GO" id="GO:0005737">
    <property type="term" value="C:cytoplasm"/>
    <property type="evidence" value="ECO:0007669"/>
    <property type="project" value="UniProtKB-SubCell"/>
</dbReference>
<dbReference type="GO" id="GO:0010181">
    <property type="term" value="F:FMN binding"/>
    <property type="evidence" value="ECO:0007669"/>
    <property type="project" value="UniProtKB-UniRule"/>
</dbReference>
<dbReference type="GO" id="GO:0004452">
    <property type="term" value="F:isopentenyl-diphosphate delta-isomerase activity"/>
    <property type="evidence" value="ECO:0007669"/>
    <property type="project" value="UniProtKB-UniRule"/>
</dbReference>
<dbReference type="GO" id="GO:0000287">
    <property type="term" value="F:magnesium ion binding"/>
    <property type="evidence" value="ECO:0007669"/>
    <property type="project" value="UniProtKB-UniRule"/>
</dbReference>
<dbReference type="GO" id="GO:0070402">
    <property type="term" value="F:NADPH binding"/>
    <property type="evidence" value="ECO:0007669"/>
    <property type="project" value="UniProtKB-UniRule"/>
</dbReference>
<dbReference type="GO" id="GO:0016491">
    <property type="term" value="F:oxidoreductase activity"/>
    <property type="evidence" value="ECO:0007669"/>
    <property type="project" value="InterPro"/>
</dbReference>
<dbReference type="GO" id="GO:0008299">
    <property type="term" value="P:isoprenoid biosynthetic process"/>
    <property type="evidence" value="ECO:0007669"/>
    <property type="project" value="UniProtKB-UniRule"/>
</dbReference>
<dbReference type="CDD" id="cd02811">
    <property type="entry name" value="IDI-2_FMN"/>
    <property type="match status" value="1"/>
</dbReference>
<dbReference type="Gene3D" id="3.20.20.70">
    <property type="entry name" value="Aldolase class I"/>
    <property type="match status" value="1"/>
</dbReference>
<dbReference type="HAMAP" id="MF_00354">
    <property type="entry name" value="Idi_2"/>
    <property type="match status" value="1"/>
</dbReference>
<dbReference type="InterPro" id="IPR013785">
    <property type="entry name" value="Aldolase_TIM"/>
</dbReference>
<dbReference type="InterPro" id="IPR000262">
    <property type="entry name" value="FMN-dep_DH"/>
</dbReference>
<dbReference type="InterPro" id="IPR011179">
    <property type="entry name" value="IPdP_isomerase"/>
</dbReference>
<dbReference type="NCBIfam" id="TIGR02151">
    <property type="entry name" value="IPP_isom_2"/>
    <property type="match status" value="1"/>
</dbReference>
<dbReference type="PANTHER" id="PTHR43665">
    <property type="entry name" value="ISOPENTENYL-DIPHOSPHATE DELTA-ISOMERASE"/>
    <property type="match status" value="1"/>
</dbReference>
<dbReference type="PANTHER" id="PTHR43665:SF1">
    <property type="entry name" value="ISOPENTENYL-DIPHOSPHATE DELTA-ISOMERASE"/>
    <property type="match status" value="1"/>
</dbReference>
<dbReference type="Pfam" id="PF01070">
    <property type="entry name" value="FMN_dh"/>
    <property type="match status" value="2"/>
</dbReference>
<dbReference type="PIRSF" id="PIRSF003314">
    <property type="entry name" value="IPP_isomerase"/>
    <property type="match status" value="1"/>
</dbReference>
<dbReference type="SMART" id="SM01240">
    <property type="entry name" value="IMPDH"/>
    <property type="match status" value="1"/>
</dbReference>
<dbReference type="SUPFAM" id="SSF51395">
    <property type="entry name" value="FMN-linked oxidoreductases"/>
    <property type="match status" value="1"/>
</dbReference>
<sequence length="361" mass="38707">MSTTITNSTAERKHSHVDICLNGDVAFSTPTTGFERYRLRHNALPEVSFADITTESRFLGRRIGAPLMISSMTGGYSEAAELNRQLAETAERFQLPLGVGSMRQALEDDAYRDSFSVVRRHAPTIQIFANIGAPEVAKGLSDKDLHIMLEMIRADGLIIHLNAAQELFQPEGGTDFRRVLDNIADIAAKLPVPVIAKEVGCGISGAVARKLLEAGVQVIDVAGAGGISWQKVEEARYTRRFGSDTRFSQEGIEELLNWGIPTAACVVEVDALRPRTAGGRPFSIIASGGIHSGLDIAKSIALGADLAASAGALLRALHHGTLEATITAWLQDLRASMFLTGSANVAELQNNRPIGDTAKQP</sequence>
<comment type="function">
    <text evidence="1">Involved in the biosynthesis of isoprenoids. Catalyzes the 1,3-allylic rearrangement of the homoallylic substrate isopentenyl (IPP) to its allylic isomer, dimethylallyl diphosphate (DMAPP).</text>
</comment>
<comment type="catalytic activity">
    <reaction evidence="1">
        <text>isopentenyl diphosphate = dimethylallyl diphosphate</text>
        <dbReference type="Rhea" id="RHEA:23284"/>
        <dbReference type="ChEBI" id="CHEBI:57623"/>
        <dbReference type="ChEBI" id="CHEBI:128769"/>
        <dbReference type="EC" id="5.3.3.2"/>
    </reaction>
</comment>
<comment type="cofactor">
    <cofactor evidence="1">
        <name>FMN</name>
        <dbReference type="ChEBI" id="CHEBI:58210"/>
    </cofactor>
</comment>
<comment type="cofactor">
    <cofactor evidence="1">
        <name>NADPH</name>
        <dbReference type="ChEBI" id="CHEBI:57783"/>
    </cofactor>
</comment>
<comment type="cofactor">
    <cofactor evidence="1">
        <name>Mg(2+)</name>
        <dbReference type="ChEBI" id="CHEBI:18420"/>
    </cofactor>
</comment>
<comment type="subunit">
    <text evidence="1">Homooctamer. Dimer of tetramers.</text>
</comment>
<comment type="subcellular location">
    <subcellularLocation>
        <location evidence="1">Cytoplasm</location>
    </subcellularLocation>
</comment>
<comment type="similarity">
    <text evidence="1">Belongs to the IPP isomerase type 2 family.</text>
</comment>
<organism>
    <name type="scientific">Chlorobium luteolum (strain DSM 273 / BCRC 81028 / 2530)</name>
    <name type="common">Pelodictyon luteolum</name>
    <dbReference type="NCBI Taxonomy" id="319225"/>
    <lineage>
        <taxon>Bacteria</taxon>
        <taxon>Pseudomonadati</taxon>
        <taxon>Chlorobiota</taxon>
        <taxon>Chlorobiia</taxon>
        <taxon>Chlorobiales</taxon>
        <taxon>Chlorobiaceae</taxon>
        <taxon>Chlorobium/Pelodictyon group</taxon>
        <taxon>Pelodictyon</taxon>
    </lineage>
</organism>
<reference key="1">
    <citation type="submission" date="2005-08" db="EMBL/GenBank/DDBJ databases">
        <title>Complete sequence of Pelodictyon luteolum DSM 273.</title>
        <authorList>
            <consortium name="US DOE Joint Genome Institute"/>
            <person name="Copeland A."/>
            <person name="Lucas S."/>
            <person name="Lapidus A."/>
            <person name="Barry K."/>
            <person name="Detter J.C."/>
            <person name="Glavina T."/>
            <person name="Hammon N."/>
            <person name="Israni S."/>
            <person name="Pitluck S."/>
            <person name="Bryant D."/>
            <person name="Schmutz J."/>
            <person name="Larimer F."/>
            <person name="Land M."/>
            <person name="Kyrpides N."/>
            <person name="Ivanova N."/>
            <person name="Richardson P."/>
        </authorList>
    </citation>
    <scope>NUCLEOTIDE SEQUENCE [LARGE SCALE GENOMIC DNA]</scope>
    <source>
        <strain>DSM 273 / BCRC 81028 / 2530</strain>
    </source>
</reference>
<feature type="chain" id="PRO_0000229507" description="Isopentenyl-diphosphate delta-isomerase">
    <location>
        <begin position="1"/>
        <end position="361"/>
    </location>
</feature>
<feature type="binding site" evidence="1">
    <location>
        <begin position="12"/>
        <end position="13"/>
    </location>
    <ligand>
        <name>substrate</name>
    </ligand>
</feature>
<feature type="binding site" evidence="1">
    <location>
        <position position="70"/>
    </location>
    <ligand>
        <name>FMN</name>
        <dbReference type="ChEBI" id="CHEBI:58210"/>
    </ligand>
</feature>
<feature type="binding site" evidence="1">
    <location>
        <begin position="71"/>
        <end position="73"/>
    </location>
    <ligand>
        <name>FMN</name>
        <dbReference type="ChEBI" id="CHEBI:58210"/>
    </ligand>
</feature>
<feature type="binding site" evidence="1">
    <location>
        <begin position="101"/>
        <end position="103"/>
    </location>
    <ligand>
        <name>substrate</name>
    </ligand>
</feature>
<feature type="binding site" evidence="1">
    <location>
        <position position="101"/>
    </location>
    <ligand>
        <name>FMN</name>
        <dbReference type="ChEBI" id="CHEBI:58210"/>
    </ligand>
</feature>
<feature type="binding site" evidence="1">
    <location>
        <position position="130"/>
    </location>
    <ligand>
        <name>FMN</name>
        <dbReference type="ChEBI" id="CHEBI:58210"/>
    </ligand>
</feature>
<feature type="binding site" evidence="1">
    <location>
        <position position="165"/>
    </location>
    <ligand>
        <name>substrate</name>
    </ligand>
</feature>
<feature type="binding site" evidence="1">
    <location>
        <position position="166"/>
    </location>
    <ligand>
        <name>Mg(2+)</name>
        <dbReference type="ChEBI" id="CHEBI:18420"/>
    </ligand>
</feature>
<feature type="binding site" evidence="1">
    <location>
        <position position="197"/>
    </location>
    <ligand>
        <name>FMN</name>
        <dbReference type="ChEBI" id="CHEBI:58210"/>
    </ligand>
</feature>
<feature type="binding site" evidence="1">
    <location>
        <begin position="310"/>
        <end position="311"/>
    </location>
    <ligand>
        <name>FMN</name>
        <dbReference type="ChEBI" id="CHEBI:58210"/>
    </ligand>
</feature>
<accession>Q3B213</accession>
<gene>
    <name evidence="1" type="primary">fni</name>
    <name type="ordered locus">Plut_1764</name>
</gene>
<proteinExistence type="inferred from homology"/>